<name>LEUD_BACCZ</name>
<accession>Q63DX5</accession>
<evidence type="ECO:0000255" key="1">
    <source>
        <dbReference type="HAMAP-Rule" id="MF_01031"/>
    </source>
</evidence>
<evidence type="ECO:0000305" key="2"/>
<reference key="1">
    <citation type="journal article" date="2006" name="J. Bacteriol.">
        <title>Pathogenomic sequence analysis of Bacillus cereus and Bacillus thuringiensis isolates closely related to Bacillus anthracis.</title>
        <authorList>
            <person name="Han C.S."/>
            <person name="Xie G."/>
            <person name="Challacombe J.F."/>
            <person name="Altherr M.R."/>
            <person name="Bhotika S.S."/>
            <person name="Bruce D."/>
            <person name="Campbell C.S."/>
            <person name="Campbell M.L."/>
            <person name="Chen J."/>
            <person name="Chertkov O."/>
            <person name="Cleland C."/>
            <person name="Dimitrijevic M."/>
            <person name="Doggett N.A."/>
            <person name="Fawcett J.J."/>
            <person name="Glavina T."/>
            <person name="Goodwin L.A."/>
            <person name="Hill K.K."/>
            <person name="Hitchcock P."/>
            <person name="Jackson P.J."/>
            <person name="Keim P."/>
            <person name="Kewalramani A.R."/>
            <person name="Longmire J."/>
            <person name="Lucas S."/>
            <person name="Malfatti S."/>
            <person name="McMurry K."/>
            <person name="Meincke L.J."/>
            <person name="Misra M."/>
            <person name="Moseman B.L."/>
            <person name="Mundt M."/>
            <person name="Munk A.C."/>
            <person name="Okinaka R.T."/>
            <person name="Parson-Quintana B."/>
            <person name="Reilly L.P."/>
            <person name="Richardson P."/>
            <person name="Robinson D.L."/>
            <person name="Rubin E."/>
            <person name="Saunders E."/>
            <person name="Tapia R."/>
            <person name="Tesmer J.G."/>
            <person name="Thayer N."/>
            <person name="Thompson L.S."/>
            <person name="Tice H."/>
            <person name="Ticknor L.O."/>
            <person name="Wills P.L."/>
            <person name="Brettin T.S."/>
            <person name="Gilna P."/>
        </authorList>
    </citation>
    <scope>NUCLEOTIDE SEQUENCE [LARGE SCALE GENOMIC DNA]</scope>
    <source>
        <strain>ZK / E33L</strain>
    </source>
</reference>
<proteinExistence type="inferred from homology"/>
<keyword id="KW-0028">Amino-acid biosynthesis</keyword>
<keyword id="KW-0100">Branched-chain amino acid biosynthesis</keyword>
<keyword id="KW-0432">Leucine biosynthesis</keyword>
<keyword id="KW-0456">Lyase</keyword>
<comment type="function">
    <text evidence="1">Catalyzes the isomerization between 2-isopropylmalate and 3-isopropylmalate, via the formation of 2-isopropylmaleate.</text>
</comment>
<comment type="catalytic activity">
    <reaction evidence="1">
        <text>(2R,3S)-3-isopropylmalate = (2S)-2-isopropylmalate</text>
        <dbReference type="Rhea" id="RHEA:32287"/>
        <dbReference type="ChEBI" id="CHEBI:1178"/>
        <dbReference type="ChEBI" id="CHEBI:35121"/>
        <dbReference type="EC" id="4.2.1.33"/>
    </reaction>
</comment>
<comment type="pathway">
    <text evidence="1">Amino-acid biosynthesis; L-leucine biosynthesis; L-leucine from 3-methyl-2-oxobutanoate: step 2/4.</text>
</comment>
<comment type="subunit">
    <text evidence="1">Heterodimer of LeuC and LeuD.</text>
</comment>
<comment type="similarity">
    <text evidence="1">Belongs to the LeuD family. LeuD type 1 subfamily.</text>
</comment>
<comment type="sequence caution" evidence="2">
    <conflict type="erroneous initiation">
        <sequence resource="EMBL-CDS" id="AAU18960"/>
    </conflict>
</comment>
<feature type="chain" id="PRO_0000141779" description="3-isopropylmalate dehydratase small subunit">
    <location>
        <begin position="1"/>
        <end position="193"/>
    </location>
</feature>
<protein>
    <recommendedName>
        <fullName evidence="1">3-isopropylmalate dehydratase small subunit</fullName>
        <ecNumber evidence="1">4.2.1.33</ecNumber>
    </recommendedName>
    <alternativeName>
        <fullName evidence="1">Alpha-IPM isomerase</fullName>
        <shortName evidence="1">IPMI</shortName>
    </alternativeName>
    <alternativeName>
        <fullName evidence="1">Isopropylmalate isomerase</fullName>
    </alternativeName>
</protein>
<organism>
    <name type="scientific">Bacillus cereus (strain ZK / E33L)</name>
    <dbReference type="NCBI Taxonomy" id="288681"/>
    <lineage>
        <taxon>Bacteria</taxon>
        <taxon>Bacillati</taxon>
        <taxon>Bacillota</taxon>
        <taxon>Bacilli</taxon>
        <taxon>Bacillales</taxon>
        <taxon>Bacillaceae</taxon>
        <taxon>Bacillus</taxon>
        <taxon>Bacillus cereus group</taxon>
    </lineage>
</organism>
<sequence length="193" mass="22594">MEPFRIHKGTAAVLMNDNIDTDQIIPKQYLKRIERTGFGKFLFDEWRYDNERHENPNFPLNAPDRKGASILITGDNFGCGSSREHAPWALADYGFRVIIAGGFADIFYMNCMKNGMLPIVMDKDMRENLTKTDAREQIEVDLENEVITTSTHRFHFTIEKMWKEKLLNGLDEISITMQYEQEIREYERKVAVY</sequence>
<gene>
    <name evidence="1" type="primary">leuD</name>
    <name type="ordered locus">BCE33L1288</name>
</gene>
<dbReference type="EC" id="4.2.1.33" evidence="1"/>
<dbReference type="EMBL" id="CP000001">
    <property type="protein sequence ID" value="AAU18960.1"/>
    <property type="status" value="ALT_INIT"/>
    <property type="molecule type" value="Genomic_DNA"/>
</dbReference>
<dbReference type="RefSeq" id="WP_000433171.1">
    <property type="nucleotide sequence ID" value="NZ_CP009968.1"/>
</dbReference>
<dbReference type="SMR" id="Q63DX5"/>
<dbReference type="KEGG" id="bcz:BCE33L1288"/>
<dbReference type="PATRIC" id="fig|288681.22.peg.4266"/>
<dbReference type="UniPathway" id="UPA00048">
    <property type="reaction ID" value="UER00071"/>
</dbReference>
<dbReference type="Proteomes" id="UP000002612">
    <property type="component" value="Chromosome"/>
</dbReference>
<dbReference type="GO" id="GO:0009316">
    <property type="term" value="C:3-isopropylmalate dehydratase complex"/>
    <property type="evidence" value="ECO:0007669"/>
    <property type="project" value="InterPro"/>
</dbReference>
<dbReference type="GO" id="GO:0003861">
    <property type="term" value="F:3-isopropylmalate dehydratase activity"/>
    <property type="evidence" value="ECO:0007669"/>
    <property type="project" value="UniProtKB-UniRule"/>
</dbReference>
<dbReference type="GO" id="GO:0009098">
    <property type="term" value="P:L-leucine biosynthetic process"/>
    <property type="evidence" value="ECO:0007669"/>
    <property type="project" value="UniProtKB-UniRule"/>
</dbReference>
<dbReference type="CDD" id="cd01577">
    <property type="entry name" value="IPMI_Swivel"/>
    <property type="match status" value="1"/>
</dbReference>
<dbReference type="FunFam" id="3.20.19.10:FF:000003">
    <property type="entry name" value="3-isopropylmalate dehydratase small subunit"/>
    <property type="match status" value="1"/>
</dbReference>
<dbReference type="Gene3D" id="3.20.19.10">
    <property type="entry name" value="Aconitase, domain 4"/>
    <property type="match status" value="1"/>
</dbReference>
<dbReference type="HAMAP" id="MF_01031">
    <property type="entry name" value="LeuD_type1"/>
    <property type="match status" value="1"/>
</dbReference>
<dbReference type="InterPro" id="IPR004431">
    <property type="entry name" value="3-IsopropMal_deHydase_ssu"/>
</dbReference>
<dbReference type="InterPro" id="IPR015928">
    <property type="entry name" value="Aconitase/3IPM_dehydase_swvl"/>
</dbReference>
<dbReference type="InterPro" id="IPR000573">
    <property type="entry name" value="AconitaseA/IPMdHydase_ssu_swvl"/>
</dbReference>
<dbReference type="InterPro" id="IPR033940">
    <property type="entry name" value="IPMI_Swivel"/>
</dbReference>
<dbReference type="InterPro" id="IPR050075">
    <property type="entry name" value="LeuD"/>
</dbReference>
<dbReference type="NCBIfam" id="TIGR00171">
    <property type="entry name" value="leuD"/>
    <property type="match status" value="1"/>
</dbReference>
<dbReference type="NCBIfam" id="NF002458">
    <property type="entry name" value="PRK01641.1"/>
    <property type="match status" value="1"/>
</dbReference>
<dbReference type="PANTHER" id="PTHR43345:SF5">
    <property type="entry name" value="3-ISOPROPYLMALATE DEHYDRATASE SMALL SUBUNIT"/>
    <property type="match status" value="1"/>
</dbReference>
<dbReference type="PANTHER" id="PTHR43345">
    <property type="entry name" value="3-ISOPROPYLMALATE DEHYDRATASE SMALL SUBUNIT 2-RELATED-RELATED"/>
    <property type="match status" value="1"/>
</dbReference>
<dbReference type="Pfam" id="PF00694">
    <property type="entry name" value="Aconitase_C"/>
    <property type="match status" value="1"/>
</dbReference>
<dbReference type="SUPFAM" id="SSF52016">
    <property type="entry name" value="LeuD/IlvD-like"/>
    <property type="match status" value="1"/>
</dbReference>